<keyword id="KW-0002">3D-structure</keyword>
<keyword id="KW-0007">Acetylation</keyword>
<keyword id="KW-0256">Endoplasmic reticulum</keyword>
<keyword id="KW-0472">Membrane</keyword>
<keyword id="KW-0597">Phosphoprotein</keyword>
<keyword id="KW-0653">Protein transport</keyword>
<keyword id="KW-1267">Proteomics identification</keyword>
<keyword id="KW-1185">Reference proteome</keyword>
<keyword id="KW-0811">Translocation</keyword>
<keyword id="KW-0812">Transmembrane</keyword>
<keyword id="KW-1133">Transmembrane helix</keyword>
<keyword id="KW-0813">Transport</keyword>
<evidence type="ECO:0000250" key="1">
    <source>
        <dbReference type="UniProtKB" id="P60058"/>
    </source>
</evidence>
<evidence type="ECO:0000250" key="2">
    <source>
        <dbReference type="UniProtKB" id="P61619"/>
    </source>
</evidence>
<evidence type="ECO:0000255" key="3"/>
<evidence type="ECO:0000269" key="4">
    <source>
    </source>
</evidence>
<evidence type="ECO:0000269" key="5">
    <source>
    </source>
</evidence>
<evidence type="ECO:0000269" key="6">
    <source>
    </source>
</evidence>
<evidence type="ECO:0000269" key="7">
    <source>
    </source>
</evidence>
<evidence type="ECO:0000305" key="8"/>
<evidence type="ECO:0007744" key="9">
    <source>
        <dbReference type="PDB" id="8B6L"/>
    </source>
</evidence>
<evidence type="ECO:0007744" key="10">
    <source>
    </source>
</evidence>
<evidence type="ECO:0007744" key="11">
    <source>
    </source>
</evidence>
<evidence type="ECO:0007744" key="12">
    <source>
    </source>
</evidence>
<evidence type="ECO:0007744" key="13">
    <source>
    </source>
</evidence>
<evidence type="ECO:0007829" key="14">
    <source>
        <dbReference type="PDB" id="8DNZ"/>
    </source>
</evidence>
<accession>P60059</accession>
<accession>B2R4J0</accession>
<accession>P38384</accession>
<accession>Q6IB25</accession>
<proteinExistence type="evidence at protein level"/>
<feature type="chain" id="PRO_0000104195" description="Protein transport protein Sec61 subunit gamma">
    <location>
        <begin position="1"/>
        <end position="68"/>
    </location>
</feature>
<feature type="topological domain" description="Cytoplasmic" evidence="3">
    <location>
        <begin position="1"/>
        <end position="32"/>
    </location>
</feature>
<feature type="transmembrane region" description="Helical" evidence="3">
    <location>
        <begin position="33"/>
        <end position="61"/>
    </location>
</feature>
<feature type="topological domain" description="Extracellular" evidence="3">
    <location>
        <begin position="62"/>
        <end position="68"/>
    </location>
</feature>
<feature type="modified residue" description="N-acetylmethionine" evidence="10 11 13">
    <location>
        <position position="1"/>
    </location>
</feature>
<feature type="modified residue" description="Phosphoserine" evidence="12">
    <location>
        <position position="18"/>
    </location>
</feature>
<feature type="helix" evidence="14">
    <location>
        <begin position="8"/>
        <end position="24"/>
    </location>
</feature>
<feature type="helix" evidence="14">
    <location>
        <begin position="30"/>
        <end position="65"/>
    </location>
</feature>
<organism>
    <name type="scientific">Homo sapiens</name>
    <name type="common">Human</name>
    <dbReference type="NCBI Taxonomy" id="9606"/>
    <lineage>
        <taxon>Eukaryota</taxon>
        <taxon>Metazoa</taxon>
        <taxon>Chordata</taxon>
        <taxon>Craniata</taxon>
        <taxon>Vertebrata</taxon>
        <taxon>Euteleostomi</taxon>
        <taxon>Mammalia</taxon>
        <taxon>Eutheria</taxon>
        <taxon>Euarchontoglires</taxon>
        <taxon>Primates</taxon>
        <taxon>Haplorrhini</taxon>
        <taxon>Catarrhini</taxon>
        <taxon>Hominidae</taxon>
        <taxon>Homo</taxon>
    </lineage>
</organism>
<reference key="1">
    <citation type="journal article" date="2000" name="Genome Res.">
        <title>Cloning and functional analysis of cDNAs with open reading frames for 300 previously undefined genes expressed in CD34+ hematopoietic stem/progenitor cells.</title>
        <authorList>
            <person name="Zhang Q.-H."/>
            <person name="Ye M."/>
            <person name="Wu X.-Y."/>
            <person name="Ren S.-X."/>
            <person name="Zhao M."/>
            <person name="Zhao C.-J."/>
            <person name="Fu G."/>
            <person name="Shen Y."/>
            <person name="Fan H.-Y."/>
            <person name="Lu G."/>
            <person name="Zhong M."/>
            <person name="Xu X.-R."/>
            <person name="Han Z.-G."/>
            <person name="Zhang J.-W."/>
            <person name="Tao J."/>
            <person name="Huang Q.-H."/>
            <person name="Zhou J."/>
            <person name="Hu G.-X."/>
            <person name="Gu J."/>
            <person name="Chen S.-J."/>
            <person name="Chen Z."/>
        </authorList>
    </citation>
    <scope>NUCLEOTIDE SEQUENCE [LARGE SCALE MRNA]</scope>
    <source>
        <tissue>Umbilical cord blood</tissue>
    </source>
</reference>
<reference key="2">
    <citation type="submission" date="2004-06" db="EMBL/GenBank/DDBJ databases">
        <title>Cloning of human full open reading frames in Gateway(TM) system entry vector (pDONR201).</title>
        <authorList>
            <person name="Ebert L."/>
            <person name="Schick M."/>
            <person name="Neubert P."/>
            <person name="Schatten R."/>
            <person name="Henze S."/>
            <person name="Korn B."/>
        </authorList>
    </citation>
    <scope>NUCLEOTIDE SEQUENCE [LARGE SCALE MRNA]</scope>
</reference>
<reference key="3">
    <citation type="journal article" date="2004" name="Nat. Genet.">
        <title>Complete sequencing and characterization of 21,243 full-length human cDNAs.</title>
        <authorList>
            <person name="Ota T."/>
            <person name="Suzuki Y."/>
            <person name="Nishikawa T."/>
            <person name="Otsuki T."/>
            <person name="Sugiyama T."/>
            <person name="Irie R."/>
            <person name="Wakamatsu A."/>
            <person name="Hayashi K."/>
            <person name="Sato H."/>
            <person name="Nagai K."/>
            <person name="Kimura K."/>
            <person name="Makita H."/>
            <person name="Sekine M."/>
            <person name="Obayashi M."/>
            <person name="Nishi T."/>
            <person name="Shibahara T."/>
            <person name="Tanaka T."/>
            <person name="Ishii S."/>
            <person name="Yamamoto J."/>
            <person name="Saito K."/>
            <person name="Kawai Y."/>
            <person name="Isono Y."/>
            <person name="Nakamura Y."/>
            <person name="Nagahari K."/>
            <person name="Murakami K."/>
            <person name="Yasuda T."/>
            <person name="Iwayanagi T."/>
            <person name="Wagatsuma M."/>
            <person name="Shiratori A."/>
            <person name="Sudo H."/>
            <person name="Hosoiri T."/>
            <person name="Kaku Y."/>
            <person name="Kodaira H."/>
            <person name="Kondo H."/>
            <person name="Sugawara M."/>
            <person name="Takahashi M."/>
            <person name="Kanda K."/>
            <person name="Yokoi T."/>
            <person name="Furuya T."/>
            <person name="Kikkawa E."/>
            <person name="Omura Y."/>
            <person name="Abe K."/>
            <person name="Kamihara K."/>
            <person name="Katsuta N."/>
            <person name="Sato K."/>
            <person name="Tanikawa M."/>
            <person name="Yamazaki M."/>
            <person name="Ninomiya K."/>
            <person name="Ishibashi T."/>
            <person name="Yamashita H."/>
            <person name="Murakawa K."/>
            <person name="Fujimori K."/>
            <person name="Tanai H."/>
            <person name="Kimata M."/>
            <person name="Watanabe M."/>
            <person name="Hiraoka S."/>
            <person name="Chiba Y."/>
            <person name="Ishida S."/>
            <person name="Ono Y."/>
            <person name="Takiguchi S."/>
            <person name="Watanabe S."/>
            <person name="Yosida M."/>
            <person name="Hotuta T."/>
            <person name="Kusano J."/>
            <person name="Kanehori K."/>
            <person name="Takahashi-Fujii A."/>
            <person name="Hara H."/>
            <person name="Tanase T.-O."/>
            <person name="Nomura Y."/>
            <person name="Togiya S."/>
            <person name="Komai F."/>
            <person name="Hara R."/>
            <person name="Takeuchi K."/>
            <person name="Arita M."/>
            <person name="Imose N."/>
            <person name="Musashino K."/>
            <person name="Yuuki H."/>
            <person name="Oshima A."/>
            <person name="Sasaki N."/>
            <person name="Aotsuka S."/>
            <person name="Yoshikawa Y."/>
            <person name="Matsunawa H."/>
            <person name="Ichihara T."/>
            <person name="Shiohata N."/>
            <person name="Sano S."/>
            <person name="Moriya S."/>
            <person name="Momiyama H."/>
            <person name="Satoh N."/>
            <person name="Takami S."/>
            <person name="Terashima Y."/>
            <person name="Suzuki O."/>
            <person name="Nakagawa S."/>
            <person name="Senoh A."/>
            <person name="Mizoguchi H."/>
            <person name="Goto Y."/>
            <person name="Shimizu F."/>
            <person name="Wakebe H."/>
            <person name="Hishigaki H."/>
            <person name="Watanabe T."/>
            <person name="Sugiyama A."/>
            <person name="Takemoto M."/>
            <person name="Kawakami B."/>
            <person name="Yamazaki M."/>
            <person name="Watanabe K."/>
            <person name="Kumagai A."/>
            <person name="Itakura S."/>
            <person name="Fukuzumi Y."/>
            <person name="Fujimori Y."/>
            <person name="Komiyama M."/>
            <person name="Tashiro H."/>
            <person name="Tanigami A."/>
            <person name="Fujiwara T."/>
            <person name="Ono T."/>
            <person name="Yamada K."/>
            <person name="Fujii Y."/>
            <person name="Ozaki K."/>
            <person name="Hirao M."/>
            <person name="Ohmori Y."/>
            <person name="Kawabata A."/>
            <person name="Hikiji T."/>
            <person name="Kobatake N."/>
            <person name="Inagaki H."/>
            <person name="Ikema Y."/>
            <person name="Okamoto S."/>
            <person name="Okitani R."/>
            <person name="Kawakami T."/>
            <person name="Noguchi S."/>
            <person name="Itoh T."/>
            <person name="Shigeta K."/>
            <person name="Senba T."/>
            <person name="Matsumura K."/>
            <person name="Nakajima Y."/>
            <person name="Mizuno T."/>
            <person name="Morinaga M."/>
            <person name="Sasaki M."/>
            <person name="Togashi T."/>
            <person name="Oyama M."/>
            <person name="Hata H."/>
            <person name="Watanabe M."/>
            <person name="Komatsu T."/>
            <person name="Mizushima-Sugano J."/>
            <person name="Satoh T."/>
            <person name="Shirai Y."/>
            <person name="Takahashi Y."/>
            <person name="Nakagawa K."/>
            <person name="Okumura K."/>
            <person name="Nagase T."/>
            <person name="Nomura N."/>
            <person name="Kikuchi H."/>
            <person name="Masuho Y."/>
            <person name="Yamashita R."/>
            <person name="Nakai K."/>
            <person name="Yada T."/>
            <person name="Nakamura Y."/>
            <person name="Ohara O."/>
            <person name="Isogai T."/>
            <person name="Sugano S."/>
        </authorList>
    </citation>
    <scope>NUCLEOTIDE SEQUENCE [LARGE SCALE MRNA]</scope>
    <source>
        <tissue>Brain</tissue>
    </source>
</reference>
<reference key="4">
    <citation type="submission" date="2005-07" db="EMBL/GenBank/DDBJ databases">
        <authorList>
            <person name="Mural R.J."/>
            <person name="Istrail S."/>
            <person name="Sutton G.G."/>
            <person name="Florea L."/>
            <person name="Halpern A.L."/>
            <person name="Mobarry C.M."/>
            <person name="Lippert R."/>
            <person name="Walenz B."/>
            <person name="Shatkay H."/>
            <person name="Dew I."/>
            <person name="Miller J.R."/>
            <person name="Flanigan M.J."/>
            <person name="Edwards N.J."/>
            <person name="Bolanos R."/>
            <person name="Fasulo D."/>
            <person name="Halldorsson B.V."/>
            <person name="Hannenhalli S."/>
            <person name="Turner R."/>
            <person name="Yooseph S."/>
            <person name="Lu F."/>
            <person name="Nusskern D.R."/>
            <person name="Shue B.C."/>
            <person name="Zheng X.H."/>
            <person name="Zhong F."/>
            <person name="Delcher A.L."/>
            <person name="Huson D.H."/>
            <person name="Kravitz S.A."/>
            <person name="Mouchard L."/>
            <person name="Reinert K."/>
            <person name="Remington K.A."/>
            <person name="Clark A.G."/>
            <person name="Waterman M.S."/>
            <person name="Eichler E.E."/>
            <person name="Adams M.D."/>
            <person name="Hunkapiller M.W."/>
            <person name="Myers E.W."/>
            <person name="Venter J.C."/>
        </authorList>
    </citation>
    <scope>NUCLEOTIDE SEQUENCE [LARGE SCALE GENOMIC DNA]</scope>
</reference>
<reference key="5">
    <citation type="journal article" date="2004" name="Genome Res.">
        <title>The status, quality, and expansion of the NIH full-length cDNA project: the Mammalian Gene Collection (MGC).</title>
        <authorList>
            <consortium name="The MGC Project Team"/>
        </authorList>
    </citation>
    <scope>NUCLEOTIDE SEQUENCE [LARGE SCALE MRNA]</scope>
    <source>
        <tissue>Lung</tissue>
        <tissue>Skin</tissue>
    </source>
</reference>
<reference key="6">
    <citation type="journal article" date="2012" name="Mol. Cell. Proteomics">
        <title>Comparative large-scale characterisation of plant vs. mammal proteins reveals similar and idiosyncratic N-alpha acetylation features.</title>
        <authorList>
            <person name="Bienvenut W.V."/>
            <person name="Sumpton D."/>
            <person name="Martinez A."/>
            <person name="Lilla S."/>
            <person name="Espagne C."/>
            <person name="Meinnel T."/>
            <person name="Giglione C."/>
        </authorList>
    </citation>
    <scope>ACETYLATION [LARGE SCALE ANALYSIS] AT MET-1</scope>
    <scope>IDENTIFICATION BY MASS SPECTROMETRY [LARGE SCALE ANALYSIS]</scope>
</reference>
<reference key="7">
    <citation type="journal article" date="2012" name="Proc. Natl. Acad. Sci. U.S.A.">
        <title>N-terminal acetylome analyses and functional insights of the N-terminal acetyltransferase NatB.</title>
        <authorList>
            <person name="Van Damme P."/>
            <person name="Lasa M."/>
            <person name="Polevoda B."/>
            <person name="Gazquez C."/>
            <person name="Elosegui-Artola A."/>
            <person name="Kim D.S."/>
            <person name="De Juan-Pardo E."/>
            <person name="Demeyer K."/>
            <person name="Hole K."/>
            <person name="Larrea E."/>
            <person name="Timmerman E."/>
            <person name="Prieto J."/>
            <person name="Arnesen T."/>
            <person name="Sherman F."/>
            <person name="Gevaert K."/>
            <person name="Aldabe R."/>
        </authorList>
    </citation>
    <scope>ACETYLATION [LARGE SCALE ANALYSIS] AT MET-1</scope>
    <scope>IDENTIFICATION BY MASS SPECTROMETRY [LARGE SCALE ANALYSIS]</scope>
</reference>
<reference key="8">
    <citation type="journal article" date="2013" name="J. Proteome Res.">
        <title>Toward a comprehensive characterization of a human cancer cell phosphoproteome.</title>
        <authorList>
            <person name="Zhou H."/>
            <person name="Di Palma S."/>
            <person name="Preisinger C."/>
            <person name="Peng M."/>
            <person name="Polat A.N."/>
            <person name="Heck A.J."/>
            <person name="Mohammed S."/>
        </authorList>
    </citation>
    <scope>PHOSPHORYLATION [LARGE SCALE ANALYSIS] AT SER-18</scope>
    <scope>IDENTIFICATION BY MASS SPECTROMETRY [LARGE SCALE ANALYSIS]</scope>
    <source>
        <tissue>Erythroleukemia</tissue>
    </source>
</reference>
<reference key="9">
    <citation type="journal article" date="2015" name="Proteomics">
        <title>N-terminome analysis of the human mitochondrial proteome.</title>
        <authorList>
            <person name="Vaca Jacome A.S."/>
            <person name="Rabilloud T."/>
            <person name="Schaeffer-Reiss C."/>
            <person name="Rompais M."/>
            <person name="Ayoub D."/>
            <person name="Lane L."/>
            <person name="Bairoch A."/>
            <person name="Van Dorsselaer A."/>
            <person name="Carapito C."/>
        </authorList>
    </citation>
    <scope>ACETYLATION [LARGE SCALE ANALYSIS] AT MET-1</scope>
    <scope>IDENTIFICATION BY MASS SPECTROMETRY [LARGE SCALE ANALYSIS]</scope>
</reference>
<reference key="10">
    <citation type="journal article" date="2018" name="Cell">
        <title>Comparative Flavivirus-Host Protein Interaction Mapping Reveals Mechanisms of Dengue and Zika Virus Pathogenesis.</title>
        <authorList>
            <person name="Shah P.S."/>
            <person name="Link N."/>
            <person name="Jang G.M."/>
            <person name="Sharp P.P."/>
            <person name="Zhu T."/>
            <person name="Swaney D.L."/>
            <person name="Johnson J.R."/>
            <person name="Von Dollen J."/>
            <person name="Ramage H.R."/>
            <person name="Satkamp L."/>
            <person name="Newton B."/>
            <person name="Huettenhain R."/>
            <person name="Petit M.J."/>
            <person name="Baum T."/>
            <person name="Everitt A."/>
            <person name="Laufman O."/>
            <person name="Tassetto M."/>
            <person name="Shales M."/>
            <person name="Stevenson E."/>
            <person name="Iglesias G.N."/>
            <person name="Shokat L."/>
            <person name="Tripathi S."/>
            <person name="Balasubramaniam V."/>
            <person name="Webb L.G."/>
            <person name="Aguirre S."/>
            <person name="Willsey A.J."/>
            <person name="Garcia-Sastre A."/>
            <person name="Pollard K.S."/>
            <person name="Cherry S."/>
            <person name="Gamarnik A.V."/>
            <person name="Marazzi I."/>
            <person name="Taunton J."/>
            <person name="Fernandez-Sesma A."/>
            <person name="Bellen H.J."/>
            <person name="Andino R."/>
            <person name="Krogan N.J."/>
        </authorList>
    </citation>
    <scope>INTERACTION WITH ZIKA VIRUS FRENCH POLYNESIA 10087PF/2013 NS4A; ZIKA VIRUS MR-766 NS4A AND DENGUE VIRUS DENV2 16681 NS4A</scope>
</reference>
<reference key="11">
    <citation type="journal article" date="2020" name="Elife">
        <title>An ER translocon for multi-pass membrane protein biogenesis.</title>
        <authorList>
            <person name="McGilvray P.T."/>
            <person name="Anghel S.A."/>
            <person name="Sundaram A."/>
            <person name="Zhong F."/>
            <person name="Trnka M.J."/>
            <person name="Fuller J.R."/>
            <person name="Hu H."/>
            <person name="Burlingame A.L."/>
            <person name="Keenan R.J."/>
        </authorList>
    </citation>
    <scope>STRUCTURE BY ELECTRON MICROSCOPY (3.8 ANGSTROMS) OF 52-239 IN COMPLEX WITH THE RIBOSOME-ASSOCIATED ER TRANSLOCON COMPLEX</scope>
    <scope>FUNCTION</scope>
    <scope>INTERACTION WITH TMCO1; CCDC47; NCLN; NOMO; TMEM147; SEC61A1 AND SEC61B</scope>
</reference>
<reference evidence="9" key="12">
    <citation type="journal article" date="2023" name="Nature">
        <title>Visualization of translation and protein biogenesis at the ER membrane.</title>
        <authorList>
            <person name="Gemmer M."/>
            <person name="Chaillet M.L."/>
            <person name="van Loenhout J."/>
            <person name="Cuevas Arenas R."/>
            <person name="Vismpas D."/>
            <person name="Grollers-Mulderij M."/>
            <person name="Koh F.A."/>
            <person name="Albanese P."/>
            <person name="Scheltema R.A."/>
            <person name="Howes S.C."/>
            <person name="Kotecha A."/>
            <person name="Fedry J."/>
            <person name="Forster F."/>
        </authorList>
    </citation>
    <scope>STRUCTURE BY ELECTRON MICROSCOPY (7.60 ANGSTROMS) OF THE STT3A-CONTAINING OLIGOSACCHARYLTRANSFERASE (OST) AND TRANSLOCON COMPLEXES</scope>
    <scope>SUBUNIT</scope>
</reference>
<reference key="13">
    <citation type="journal article" date="2022" name="Nature">
        <title>Substrate-driven assembly of a translocon for multipass membrane proteins.</title>
        <authorList>
            <person name="Sundaram A."/>
            <person name="Yamsek M."/>
            <person name="Zhong F."/>
            <person name="Hooda Y."/>
            <person name="Hegde R.S."/>
            <person name="Keenan R.J."/>
        </authorList>
    </citation>
    <scope>FUNCTION</scope>
    <scope>INTERACTION WITH THE MULTI-PASS TRANSLOCON COMPLEX</scope>
    <scope>SUBCELLULAR LOCATION</scope>
</reference>
<protein>
    <recommendedName>
        <fullName>Protein transport protein Sec61 subunit gamma</fullName>
    </recommendedName>
</protein>
<dbReference type="EMBL" id="AF054184">
    <property type="protein sequence ID" value="AAC99401.1"/>
    <property type="molecule type" value="mRNA"/>
</dbReference>
<dbReference type="EMBL" id="CR456979">
    <property type="protein sequence ID" value="CAG33260.1"/>
    <property type="molecule type" value="mRNA"/>
</dbReference>
<dbReference type="EMBL" id="AK311845">
    <property type="protein sequence ID" value="BAG34787.1"/>
    <property type="molecule type" value="mRNA"/>
</dbReference>
<dbReference type="EMBL" id="CH471201">
    <property type="protein sequence ID" value="EAW50960.1"/>
    <property type="molecule type" value="Genomic_DNA"/>
</dbReference>
<dbReference type="EMBL" id="BC009480">
    <property type="protein sequence ID" value="AAH09480.1"/>
    <property type="molecule type" value="mRNA"/>
</dbReference>
<dbReference type="EMBL" id="BC051840">
    <property type="protein sequence ID" value="AAH51840.1"/>
    <property type="molecule type" value="mRNA"/>
</dbReference>
<dbReference type="CCDS" id="CCDS5513.1"/>
<dbReference type="PIR" id="S42412">
    <property type="entry name" value="S42412"/>
</dbReference>
<dbReference type="RefSeq" id="NP_001012474.1">
    <property type="nucleotide sequence ID" value="NM_001012456.2"/>
</dbReference>
<dbReference type="RefSeq" id="NP_055117.1">
    <property type="nucleotide sequence ID" value="NM_014302.4"/>
</dbReference>
<dbReference type="PDB" id="6W6L">
    <property type="method" value="EM"/>
    <property type="resolution" value="3.84 A"/>
    <property type="chains" value="2=1-68"/>
</dbReference>
<dbReference type="PDB" id="8B6L">
    <property type="method" value="EM"/>
    <property type="resolution" value="7.60 A"/>
    <property type="chains" value="C=1-68"/>
</dbReference>
<dbReference type="PDB" id="8DNV">
    <property type="method" value="EM"/>
    <property type="resolution" value="3.03 A"/>
    <property type="chains" value="B=1-68"/>
</dbReference>
<dbReference type="PDB" id="8DNW">
    <property type="method" value="EM"/>
    <property type="resolution" value="3.40 A"/>
    <property type="chains" value="B=1-68"/>
</dbReference>
<dbReference type="PDB" id="8DNX">
    <property type="method" value="EM"/>
    <property type="resolution" value="2.98 A"/>
    <property type="chains" value="B=1-68"/>
</dbReference>
<dbReference type="PDB" id="8DNY">
    <property type="method" value="EM"/>
    <property type="resolution" value="2.85 A"/>
    <property type="chains" value="B=1-68"/>
</dbReference>
<dbReference type="PDB" id="8DNZ">
    <property type="method" value="EM"/>
    <property type="resolution" value="2.57 A"/>
    <property type="chains" value="B=1-68"/>
</dbReference>
<dbReference type="PDB" id="8DO0">
    <property type="method" value="EM"/>
    <property type="resolution" value="2.86 A"/>
    <property type="chains" value="B=1-68"/>
</dbReference>
<dbReference type="PDB" id="8DO1">
    <property type="method" value="EM"/>
    <property type="resolution" value="3.01 A"/>
    <property type="chains" value="B=1-68"/>
</dbReference>
<dbReference type="PDB" id="8DO2">
    <property type="method" value="EM"/>
    <property type="resolution" value="2.95 A"/>
    <property type="chains" value="B=1-68"/>
</dbReference>
<dbReference type="PDB" id="8DO3">
    <property type="method" value="EM"/>
    <property type="resolution" value="3.22 A"/>
    <property type="chains" value="B=1-68"/>
</dbReference>
<dbReference type="PDB" id="8OJ0">
    <property type="method" value="EM"/>
    <property type="resolution" value="3.30 A"/>
    <property type="chains" value="2=1-68"/>
</dbReference>
<dbReference type="PDB" id="8OJ8">
    <property type="method" value="EM"/>
    <property type="resolution" value="3.30 A"/>
    <property type="chains" value="2=1-68"/>
</dbReference>
<dbReference type="PDBsum" id="6W6L"/>
<dbReference type="PDBsum" id="8B6L"/>
<dbReference type="PDBsum" id="8DNV"/>
<dbReference type="PDBsum" id="8DNW"/>
<dbReference type="PDBsum" id="8DNX"/>
<dbReference type="PDBsum" id="8DNY"/>
<dbReference type="PDBsum" id="8DNZ"/>
<dbReference type="PDBsum" id="8DO0"/>
<dbReference type="PDBsum" id="8DO1"/>
<dbReference type="PDBsum" id="8DO2"/>
<dbReference type="PDBsum" id="8DO3"/>
<dbReference type="PDBsum" id="8OJ0"/>
<dbReference type="PDBsum" id="8OJ8"/>
<dbReference type="EMDB" id="EMD-15870"/>
<dbReference type="EMDB" id="EMD-16902"/>
<dbReference type="EMDB" id="EMD-16908"/>
<dbReference type="EMDB" id="EMD-27581"/>
<dbReference type="EMDB" id="EMD-27582"/>
<dbReference type="EMDB" id="EMD-27583"/>
<dbReference type="EMDB" id="EMD-27584"/>
<dbReference type="EMDB" id="EMD-27585"/>
<dbReference type="EMDB" id="EMD-27586"/>
<dbReference type="EMDB" id="EMD-27587"/>
<dbReference type="EMDB" id="EMD-27588"/>
<dbReference type="EMDB" id="EMD-27589"/>
<dbReference type="EMDB" id="EMD-29608"/>
<dbReference type="EMDB" id="EMD-29609"/>
<dbReference type="EMDB" id="EMD-29610"/>
<dbReference type="EMDB" id="EMD-29611"/>
<dbReference type="EMDB" id="EMD-29612"/>
<dbReference type="EMDB" id="EMD-29613"/>
<dbReference type="EMDB" id="EMD-29614"/>
<dbReference type="EMDB" id="EMD-29616"/>
<dbReference type="EMDB" id="EMD-29617"/>
<dbReference type="EMDB" id="EMD-29635"/>
<dbReference type="SMR" id="P60059"/>
<dbReference type="BioGRID" id="117039">
    <property type="interactions" value="47"/>
</dbReference>
<dbReference type="ComplexPortal" id="CPX-8073">
    <property type="entry name" value="SEC61 protein-conducting channel complex, SEC1A1 variant"/>
</dbReference>
<dbReference type="ComplexPortal" id="CPX-8169">
    <property type="entry name" value="SEC61 protein-conducting channel complex, SEC1A2 variant"/>
</dbReference>
<dbReference type="FunCoup" id="P60059">
    <property type="interactions" value="791"/>
</dbReference>
<dbReference type="IntAct" id="P60059">
    <property type="interactions" value="30"/>
</dbReference>
<dbReference type="MINT" id="P60059"/>
<dbReference type="STRING" id="9606.ENSP00000388337"/>
<dbReference type="TCDB" id="3.A.5.9.1">
    <property type="family name" value="the general secretory pathway (sec) family"/>
</dbReference>
<dbReference type="GlyGen" id="P60059">
    <property type="glycosylation" value="1 site, 1 O-linked glycan (1 site)"/>
</dbReference>
<dbReference type="iPTMnet" id="P60059"/>
<dbReference type="PhosphoSitePlus" id="P60059"/>
<dbReference type="SwissPalm" id="P60059"/>
<dbReference type="BioMuta" id="SEC61G"/>
<dbReference type="DMDM" id="38503386"/>
<dbReference type="jPOST" id="P60059"/>
<dbReference type="MassIVE" id="P60059"/>
<dbReference type="PaxDb" id="9606-ENSP00000388337"/>
<dbReference type="PeptideAtlas" id="P60059"/>
<dbReference type="ProteomicsDB" id="57183"/>
<dbReference type="Pumba" id="P60059"/>
<dbReference type="TopDownProteomics" id="P60059"/>
<dbReference type="Antibodypedia" id="44752">
    <property type="antibodies" value="69 antibodies from 17 providers"/>
</dbReference>
<dbReference type="DNASU" id="23480"/>
<dbReference type="Ensembl" id="ENST00000352861.9">
    <property type="protein sequence ID" value="ENSP00000341538.4"/>
    <property type="gene ID" value="ENSG00000132432.14"/>
</dbReference>
<dbReference type="Ensembl" id="ENST00000395535.7">
    <property type="protein sequence ID" value="ENSP00000378906.3"/>
    <property type="gene ID" value="ENSG00000132432.14"/>
</dbReference>
<dbReference type="Ensembl" id="ENST00000415949.5">
    <property type="protein sequence ID" value="ENSP00000388337.1"/>
    <property type="gene ID" value="ENSG00000132432.14"/>
</dbReference>
<dbReference type="Ensembl" id="ENST00000450622.1">
    <property type="protein sequence ID" value="ENSP00000409884.1"/>
    <property type="gene ID" value="ENSG00000132432.14"/>
</dbReference>
<dbReference type="GeneID" id="23480"/>
<dbReference type="KEGG" id="hsa:23480"/>
<dbReference type="MANE-Select" id="ENST00000352861.9">
    <property type="protein sequence ID" value="ENSP00000341538.4"/>
    <property type="RefSeq nucleotide sequence ID" value="NM_014302.4"/>
    <property type="RefSeq protein sequence ID" value="NP_055117.1"/>
</dbReference>
<dbReference type="UCSC" id="uc003tqf.4">
    <property type="organism name" value="human"/>
</dbReference>
<dbReference type="AGR" id="HGNC:18277"/>
<dbReference type="CTD" id="23480"/>
<dbReference type="DisGeNET" id="23480"/>
<dbReference type="GeneCards" id="SEC61G"/>
<dbReference type="HGNC" id="HGNC:18277">
    <property type="gene designation" value="SEC61G"/>
</dbReference>
<dbReference type="HPA" id="ENSG00000132432">
    <property type="expression patterns" value="Low tissue specificity"/>
</dbReference>
<dbReference type="MIM" id="609215">
    <property type="type" value="gene"/>
</dbReference>
<dbReference type="neXtProt" id="NX_P60059"/>
<dbReference type="NIAGADS" id="ENSG00000132432"/>
<dbReference type="OpenTargets" id="ENSG00000132432"/>
<dbReference type="PharmGKB" id="PA134939045"/>
<dbReference type="VEuPathDB" id="HostDB:ENSG00000132432"/>
<dbReference type="eggNOG" id="KOG3498">
    <property type="taxonomic scope" value="Eukaryota"/>
</dbReference>
<dbReference type="GeneTree" id="ENSGT00390000001319"/>
<dbReference type="HOGENOM" id="CLU_167752_2_0_1"/>
<dbReference type="InParanoid" id="P60059"/>
<dbReference type="OMA" id="KPDQKEY"/>
<dbReference type="OrthoDB" id="2401875at2759"/>
<dbReference type="PAN-GO" id="P60059">
    <property type="GO annotations" value="3 GO annotations based on evolutionary models"/>
</dbReference>
<dbReference type="PhylomeDB" id="P60059"/>
<dbReference type="TreeFam" id="TF300232"/>
<dbReference type="PathwayCommons" id="P60059"/>
<dbReference type="Reactome" id="R-HSA-1236974">
    <property type="pathway name" value="ER-Phagosome pathway"/>
</dbReference>
<dbReference type="Reactome" id="R-HSA-1799339">
    <property type="pathway name" value="SRP-dependent cotranslational protein targeting to membrane"/>
</dbReference>
<dbReference type="Reactome" id="R-HSA-9609523">
    <property type="pathway name" value="Insertion of tail-anchored proteins into the endoplasmic reticulum membrane"/>
</dbReference>
<dbReference type="SignaLink" id="P60059"/>
<dbReference type="SIGNOR" id="P60059"/>
<dbReference type="BioGRID-ORCS" id="23480">
    <property type="hits" value="711 hits in 1127 CRISPR screens"/>
</dbReference>
<dbReference type="ChiTaRS" id="SEC61G">
    <property type="organism name" value="human"/>
</dbReference>
<dbReference type="GeneWiki" id="SEC61G"/>
<dbReference type="GenomeRNAi" id="23480"/>
<dbReference type="Pharos" id="P60059">
    <property type="development level" value="Tbio"/>
</dbReference>
<dbReference type="PRO" id="PR:P60059"/>
<dbReference type="Proteomes" id="UP000005640">
    <property type="component" value="Chromosome 7"/>
</dbReference>
<dbReference type="RNAct" id="P60059">
    <property type="molecule type" value="protein"/>
</dbReference>
<dbReference type="Bgee" id="ENSG00000132432">
    <property type="expression patterns" value="Expressed in pituitary gland and 215 other cell types or tissues"/>
</dbReference>
<dbReference type="ExpressionAtlas" id="P60059">
    <property type="expression patterns" value="baseline and differential"/>
</dbReference>
<dbReference type="GO" id="GO:0005829">
    <property type="term" value="C:cytosol"/>
    <property type="evidence" value="ECO:0000304"/>
    <property type="project" value="Reactome"/>
</dbReference>
<dbReference type="GO" id="GO:0016020">
    <property type="term" value="C:membrane"/>
    <property type="evidence" value="ECO:0000314"/>
    <property type="project" value="MGI"/>
</dbReference>
<dbReference type="GO" id="GO:0005784">
    <property type="term" value="C:Sec61 translocon complex"/>
    <property type="evidence" value="ECO:0000314"/>
    <property type="project" value="UniProtKB"/>
</dbReference>
<dbReference type="GO" id="GO:0071261">
    <property type="term" value="C:Ssh1 translocon complex"/>
    <property type="evidence" value="ECO:0000318"/>
    <property type="project" value="GO_Central"/>
</dbReference>
<dbReference type="GO" id="GO:0008320">
    <property type="term" value="F:protein transmembrane transporter activity"/>
    <property type="evidence" value="ECO:0000250"/>
    <property type="project" value="UniProtKB"/>
</dbReference>
<dbReference type="GO" id="GO:0043022">
    <property type="term" value="F:ribosome binding"/>
    <property type="evidence" value="ECO:0000314"/>
    <property type="project" value="UniProtKB"/>
</dbReference>
<dbReference type="GO" id="GO:0031204">
    <property type="term" value="P:post-translational protein targeting to membrane, translocation"/>
    <property type="evidence" value="ECO:0000318"/>
    <property type="project" value="GO_Central"/>
</dbReference>
<dbReference type="GO" id="GO:0045047">
    <property type="term" value="P:protein targeting to ER"/>
    <property type="evidence" value="ECO:0000250"/>
    <property type="project" value="UniProtKB"/>
</dbReference>
<dbReference type="FunFam" id="1.20.5.820:FF:000001">
    <property type="entry name" value="Transport protein Sec61 subunit gamma"/>
    <property type="match status" value="1"/>
</dbReference>
<dbReference type="Gene3D" id="1.20.5.820">
    <property type="entry name" value="Preprotein translocase SecE subunit"/>
    <property type="match status" value="1"/>
</dbReference>
<dbReference type="HAMAP" id="MF_00422">
    <property type="entry name" value="SecE"/>
    <property type="match status" value="1"/>
</dbReference>
<dbReference type="InterPro" id="IPR023391">
    <property type="entry name" value="Prot_translocase_SecE_dom_sf"/>
</dbReference>
<dbReference type="InterPro" id="IPR008158">
    <property type="entry name" value="Translocase_Sec61-g"/>
</dbReference>
<dbReference type="InterPro" id="IPR001901">
    <property type="entry name" value="Translocase_SecE/Sec61-g"/>
</dbReference>
<dbReference type="NCBIfam" id="TIGR00327">
    <property type="entry name" value="secE_euk_arch"/>
    <property type="match status" value="1"/>
</dbReference>
<dbReference type="PANTHER" id="PTHR12309">
    <property type="entry name" value="SEC61 GAMMA SUBUNIT"/>
    <property type="match status" value="1"/>
</dbReference>
<dbReference type="Pfam" id="PF00584">
    <property type="entry name" value="SecE"/>
    <property type="match status" value="1"/>
</dbReference>
<dbReference type="SUPFAM" id="SSF103456">
    <property type="entry name" value="Preprotein translocase SecE subunit"/>
    <property type="match status" value="1"/>
</dbReference>
<dbReference type="PROSITE" id="PS01067">
    <property type="entry name" value="SECE_SEC61G"/>
    <property type="match status" value="1"/>
</dbReference>
<comment type="function">
    <text evidence="1 2 5 6">Component of SEC61 channel-forming translocon complex that mediates transport of signal peptide-containing precursor polypeptides across the endoplasmic reticulum (ER) (By similarity). Forms a ribosome receptor and a gated pore in the ER membrane, both functions required for cotranslational translocation of nascent polypeptides (By similarity). The SEC61 channel is also involved in ER membrane insertion of transmembrane proteins: it mediates membrane insertion of the first few transmembrane segments of proteins, while insertion of subsequent transmembrane regions of multi-pass membrane proteins is mediated by the multi-pass translocon (MPT) complex (PubMed:32820719, PubMed:36261522). The SEC61 channel cooperates with the translocating protein TRAM1 to import nascent proteins into the ER (By similarity).</text>
</comment>
<comment type="subunit">
    <text evidence="5 6 7">The SEC61 channel-forming translocon complex consists of channel-forming core components SEC61A1, SEC61B and SEC61G and different auxiliary components such as SEC62 and SEC63 (PubMed:36697828). The SEC61 channel associates with the multi-pass translocon (MPT) complex (PubMed:32820719, PubMed:36261522).</text>
</comment>
<comment type="subunit">
    <text evidence="4">(Microbial infection) May interact with Zika virus strain Mr-766 non-structural protein 4A/NS4A (PubMed:30550790). May interact with Zika virus French Polynesia 10087PF/2013 non-structural protein 4A/NS4A (PubMed:30550790).</text>
</comment>
<comment type="subunit">
    <text evidence="4">(Microbial infection) May interact with Dengue virus DENV2 16681 non-structural protein 4A/NS4A.</text>
</comment>
<comment type="interaction">
    <interactant intactId="EBI-4402709">
        <id>P60059</id>
    </interactant>
    <interactant intactId="EBI-13059134">
        <id>Q13520</id>
        <label>AQP6</label>
    </interactant>
    <organismsDiffer>false</organismsDiffer>
    <experiments>3</experiments>
</comment>
<comment type="interaction">
    <interactant intactId="EBI-4402709">
        <id>P60059</id>
    </interactant>
    <interactant intactId="EBI-6942903">
        <id>Q96BA8</id>
        <label>CREB3L1</label>
    </interactant>
    <organismsDiffer>false</organismsDiffer>
    <experiments>5</experiments>
</comment>
<comment type="interaction">
    <interactant intactId="EBI-4402709">
        <id>P60059</id>
    </interactant>
    <interactant intactId="EBI-18304435">
        <id>Q5JX71</id>
        <label>FAM209A</label>
    </interactant>
    <organismsDiffer>false</organismsDiffer>
    <experiments>3</experiments>
</comment>
<comment type="interaction">
    <interactant intactId="EBI-4402709">
        <id>P60059</id>
    </interactant>
    <interactant intactId="EBI-11911016">
        <id>P80188</id>
        <label>LCN2</label>
    </interactant>
    <organismsDiffer>false</organismsDiffer>
    <experiments>3</experiments>
</comment>
<comment type="interaction">
    <interactant intactId="EBI-4402709">
        <id>P60059</id>
    </interactant>
    <interactant intactId="EBI-11304917">
        <id>Q8N386</id>
        <label>LRRC25</label>
    </interactant>
    <organismsDiffer>false</organismsDiffer>
    <experiments>3</experiments>
</comment>
<comment type="interaction">
    <interactant intactId="EBI-4402709">
        <id>P60059</id>
    </interactant>
    <interactant intactId="EBI-594836">
        <id>O00623</id>
        <label>PEX12</label>
    </interactant>
    <organismsDiffer>false</organismsDiffer>
    <experiments>3</experiments>
</comment>
<comment type="interaction">
    <interactant intactId="EBI-4402709">
        <id>P60059</id>
    </interactant>
    <interactant intactId="EBI-10197617">
        <id>P11686</id>
        <label>SFTPC</label>
    </interactant>
    <organismsDiffer>false</organismsDiffer>
    <experiments>3</experiments>
</comment>
<comment type="interaction">
    <interactant intactId="EBI-4402709">
        <id>P60059</id>
    </interactant>
    <interactant intactId="EBI-726044">
        <id>Q9NW97</id>
        <label>TMEM51</label>
    </interactant>
    <organismsDiffer>false</organismsDiffer>
    <experiments>3</experiments>
</comment>
<comment type="subcellular location">
    <subcellularLocation>
        <location evidence="6">Endoplasmic reticulum membrane</location>
        <topology evidence="3">Single-pass membrane protein</topology>
    </subcellularLocation>
</comment>
<comment type="similarity">
    <text evidence="8">Belongs to the SecE/SEC61-gamma family.</text>
</comment>
<sequence>MDQVMQFVEPSRQFVKDSIRLVKRCTKPDRKEFQKIAMATAIGFAIMGFIGFFVKLIHIPINNIIVGG</sequence>
<gene>
    <name type="primary">SEC61G</name>
</gene>
<name>SC61G_HUMAN</name>